<sequence length="331" mass="36167">MSTKEKLISHVMKEEPVGSRNKVTVVGVGMVGMASAVSILLKDLCDELAMVDVMEDKLKGEVMDLQHGSLFLKTKIVGDKDYSVTANSKVVVVTAGARQQEGESRLNLVQRNVNIFKFIIPNIVKYSPNCILMVVSNPVDILTYVAWKLSGFPRHRVIGSGTNLDSARFRHLIGEKLHLHPSSCHAWIVGEHGDSSVPVWSGVNVAGVSLQGLNPQMGTEGDGENWKAIHKEVVDGAYEVIKLKGYTSWAIGMSVADLVESIIKNMHKVHPVSTLVQGMHGVKDEVFLSVPCVLGNSGLTDVIHMTLKAEEEKQVQKSAETLWGVQKELIL</sequence>
<name>LDHA_NOTNE</name>
<evidence type="ECO:0000250" key="1"/>
<evidence type="ECO:0000250" key="2">
    <source>
        <dbReference type="UniProtKB" id="P00338"/>
    </source>
</evidence>
<evidence type="ECO:0000305" key="3"/>
<dbReference type="EC" id="1.1.1.27" evidence="2"/>
<dbReference type="EMBL" id="AF079822">
    <property type="protein sequence ID" value="AAC63280.1"/>
    <property type="molecule type" value="mRNA"/>
</dbReference>
<dbReference type="SMR" id="O93539"/>
<dbReference type="KEGG" id="ncc:104948055"/>
<dbReference type="UniPathway" id="UPA00554">
    <property type="reaction ID" value="UER00611"/>
</dbReference>
<dbReference type="GO" id="GO:0005737">
    <property type="term" value="C:cytoplasm"/>
    <property type="evidence" value="ECO:0007669"/>
    <property type="project" value="UniProtKB-SubCell"/>
</dbReference>
<dbReference type="GO" id="GO:0004459">
    <property type="term" value="F:L-lactate dehydrogenase activity"/>
    <property type="evidence" value="ECO:0007669"/>
    <property type="project" value="UniProtKB-EC"/>
</dbReference>
<dbReference type="GO" id="GO:0006089">
    <property type="term" value="P:lactate metabolic process"/>
    <property type="evidence" value="ECO:0007669"/>
    <property type="project" value="TreeGrafter"/>
</dbReference>
<dbReference type="CDD" id="cd05293">
    <property type="entry name" value="LDH_1"/>
    <property type="match status" value="1"/>
</dbReference>
<dbReference type="FunFam" id="3.40.50.720:FF:000029">
    <property type="entry name" value="L-lactate dehydrogenase A chain"/>
    <property type="match status" value="1"/>
</dbReference>
<dbReference type="FunFam" id="3.90.110.10:FF:000003">
    <property type="entry name" value="L-lactate dehydrogenase A chain"/>
    <property type="match status" value="1"/>
</dbReference>
<dbReference type="Gene3D" id="3.90.110.10">
    <property type="entry name" value="Lactate dehydrogenase/glycoside hydrolase, family 4, C-terminal"/>
    <property type="match status" value="1"/>
</dbReference>
<dbReference type="Gene3D" id="3.40.50.720">
    <property type="entry name" value="NAD(P)-binding Rossmann-like Domain"/>
    <property type="match status" value="1"/>
</dbReference>
<dbReference type="HAMAP" id="MF_00488">
    <property type="entry name" value="Lactate_dehydrog"/>
    <property type="match status" value="1"/>
</dbReference>
<dbReference type="InterPro" id="IPR001557">
    <property type="entry name" value="L-lactate/malate_DH"/>
</dbReference>
<dbReference type="InterPro" id="IPR011304">
    <property type="entry name" value="L-lactate_DH"/>
</dbReference>
<dbReference type="InterPro" id="IPR018177">
    <property type="entry name" value="L-lactate_DH_AS"/>
</dbReference>
<dbReference type="InterPro" id="IPR022383">
    <property type="entry name" value="Lactate/malate_DH_C"/>
</dbReference>
<dbReference type="InterPro" id="IPR001236">
    <property type="entry name" value="Lactate/malate_DH_N"/>
</dbReference>
<dbReference type="InterPro" id="IPR015955">
    <property type="entry name" value="Lactate_DH/Glyco_Ohase_4_C"/>
</dbReference>
<dbReference type="InterPro" id="IPR036291">
    <property type="entry name" value="NAD(P)-bd_dom_sf"/>
</dbReference>
<dbReference type="NCBIfam" id="TIGR01771">
    <property type="entry name" value="L-LDH-NAD"/>
    <property type="match status" value="1"/>
</dbReference>
<dbReference type="PANTHER" id="PTHR43128">
    <property type="entry name" value="L-2-HYDROXYCARBOXYLATE DEHYDROGENASE (NAD(P)(+))"/>
    <property type="match status" value="1"/>
</dbReference>
<dbReference type="PANTHER" id="PTHR43128:SF10">
    <property type="entry name" value="L-LACTATE DEHYDROGENASE A CHAIN"/>
    <property type="match status" value="1"/>
</dbReference>
<dbReference type="Pfam" id="PF02866">
    <property type="entry name" value="Ldh_1_C"/>
    <property type="match status" value="1"/>
</dbReference>
<dbReference type="Pfam" id="PF00056">
    <property type="entry name" value="Ldh_1_N"/>
    <property type="match status" value="1"/>
</dbReference>
<dbReference type="PIRSF" id="PIRSF000102">
    <property type="entry name" value="Lac_mal_DH"/>
    <property type="match status" value="1"/>
</dbReference>
<dbReference type="PRINTS" id="PR00086">
    <property type="entry name" value="LLDHDRGNASE"/>
</dbReference>
<dbReference type="SUPFAM" id="SSF56327">
    <property type="entry name" value="LDH C-terminal domain-like"/>
    <property type="match status" value="1"/>
</dbReference>
<dbReference type="SUPFAM" id="SSF51735">
    <property type="entry name" value="NAD(P)-binding Rossmann-fold domains"/>
    <property type="match status" value="1"/>
</dbReference>
<dbReference type="PROSITE" id="PS00064">
    <property type="entry name" value="L_LDH"/>
    <property type="match status" value="1"/>
</dbReference>
<accession>O93539</accession>
<gene>
    <name type="primary">ldha</name>
</gene>
<protein>
    <recommendedName>
        <fullName>L-lactate dehydrogenase A chain</fullName>
        <shortName>LDH-A</shortName>
        <ecNumber evidence="2">1.1.1.27</ecNumber>
    </recommendedName>
</protein>
<feature type="initiator methionine" description="Removed" evidence="1">
    <location>
        <position position="1"/>
    </location>
</feature>
<feature type="chain" id="PRO_0000168445" description="L-lactate dehydrogenase A chain">
    <location>
        <begin position="2"/>
        <end position="331"/>
    </location>
</feature>
<feature type="active site" description="Proton acceptor" evidence="1">
    <location>
        <position position="192"/>
    </location>
</feature>
<feature type="binding site" evidence="1">
    <location>
        <begin position="29"/>
        <end position="57"/>
    </location>
    <ligand>
        <name>NAD(+)</name>
        <dbReference type="ChEBI" id="CHEBI:57540"/>
    </ligand>
</feature>
<feature type="binding site" evidence="1">
    <location>
        <position position="98"/>
    </location>
    <ligand>
        <name>NAD(+)</name>
        <dbReference type="ChEBI" id="CHEBI:57540"/>
    </ligand>
</feature>
<feature type="binding site" evidence="1">
    <location>
        <position position="105"/>
    </location>
    <ligand>
        <name>substrate</name>
    </ligand>
</feature>
<feature type="binding site" evidence="1">
    <location>
        <position position="137"/>
    </location>
    <ligand>
        <name>NAD(+)</name>
        <dbReference type="ChEBI" id="CHEBI:57540"/>
    </ligand>
</feature>
<feature type="binding site" evidence="1">
    <location>
        <position position="137"/>
    </location>
    <ligand>
        <name>substrate</name>
    </ligand>
</feature>
<feature type="binding site" evidence="1">
    <location>
        <position position="168"/>
    </location>
    <ligand>
        <name>substrate</name>
    </ligand>
</feature>
<feature type="binding site" evidence="1">
    <location>
        <position position="247"/>
    </location>
    <ligand>
        <name>substrate</name>
    </ligand>
</feature>
<keyword id="KW-0963">Cytoplasm</keyword>
<keyword id="KW-0520">NAD</keyword>
<keyword id="KW-0560">Oxidoreductase</keyword>
<organism>
    <name type="scientific">Notothenia neglecta</name>
    <name type="common">Yellowbelly rockcod</name>
    <name type="synonym">Notothenia coriiceps neglecta</name>
    <dbReference type="NCBI Taxonomy" id="202063"/>
    <lineage>
        <taxon>Eukaryota</taxon>
        <taxon>Metazoa</taxon>
        <taxon>Chordata</taxon>
        <taxon>Craniata</taxon>
        <taxon>Vertebrata</taxon>
        <taxon>Euteleostomi</taxon>
        <taxon>Actinopterygii</taxon>
        <taxon>Neopterygii</taxon>
        <taxon>Teleostei</taxon>
        <taxon>Neoteleostei</taxon>
        <taxon>Acanthomorphata</taxon>
        <taxon>Eupercaria</taxon>
        <taxon>Perciformes</taxon>
        <taxon>Notothenioidei</taxon>
        <taxon>Nototheniidae</taxon>
        <taxon>Notothenia</taxon>
    </lineage>
</organism>
<comment type="function">
    <text evidence="2">Interconverts simultaneously and stereospecifically pyruvate and lactate with concomitant interconversion of NADH and NAD(+).</text>
</comment>
<comment type="catalytic activity">
    <reaction evidence="2">
        <text>(S)-lactate + NAD(+) = pyruvate + NADH + H(+)</text>
        <dbReference type="Rhea" id="RHEA:23444"/>
        <dbReference type="ChEBI" id="CHEBI:15361"/>
        <dbReference type="ChEBI" id="CHEBI:15378"/>
        <dbReference type="ChEBI" id="CHEBI:16651"/>
        <dbReference type="ChEBI" id="CHEBI:57540"/>
        <dbReference type="ChEBI" id="CHEBI:57945"/>
        <dbReference type="EC" id="1.1.1.27"/>
    </reaction>
    <physiologicalReaction direction="left-to-right" evidence="2">
        <dbReference type="Rhea" id="RHEA:23445"/>
    </physiologicalReaction>
    <physiologicalReaction direction="right-to-left" evidence="2">
        <dbReference type="Rhea" id="RHEA:23446"/>
    </physiologicalReaction>
</comment>
<comment type="pathway">
    <text evidence="2">Fermentation; pyruvate fermentation to lactate; (S)-lactate from pyruvate: step 1/1.</text>
</comment>
<comment type="subunit">
    <text evidence="1">Homotetramer.</text>
</comment>
<comment type="subcellular location">
    <subcellularLocation>
        <location evidence="1">Cytoplasm</location>
    </subcellularLocation>
</comment>
<comment type="similarity">
    <text evidence="3">Belongs to the LDH/MDH superfamily. LDH family.</text>
</comment>
<proteinExistence type="evidence at transcript level"/>
<reference key="1">
    <citation type="journal article" date="1998" name="Proc. Natl. Acad. Sci. U.S.A.">
        <title>Hot spots in cold adaptation: localized increases in conformational flexibility in lactate dehydrogenase A4 orthologs of Antarctic notothenioid fishes.</title>
        <authorList>
            <person name="Fields P.A."/>
            <person name="Somero G.N."/>
        </authorList>
    </citation>
    <scope>NUCLEOTIDE SEQUENCE [MRNA]</scope>
    <source>
        <tissue>Muscle</tissue>
    </source>
</reference>